<feature type="chain" id="PRO_0000193951" description="Iron-sulfur cluster assembly protein CyaY">
    <location>
        <begin position="1"/>
        <end position="110"/>
    </location>
</feature>
<accession>Q4K3W5</accession>
<organism>
    <name type="scientific">Pseudomonas fluorescens (strain ATCC BAA-477 / NRRL B-23932 / Pf-5)</name>
    <dbReference type="NCBI Taxonomy" id="220664"/>
    <lineage>
        <taxon>Bacteria</taxon>
        <taxon>Pseudomonadati</taxon>
        <taxon>Pseudomonadota</taxon>
        <taxon>Gammaproteobacteria</taxon>
        <taxon>Pseudomonadales</taxon>
        <taxon>Pseudomonadaceae</taxon>
        <taxon>Pseudomonas</taxon>
    </lineage>
</organism>
<sequence length="110" mass="12705">MSLTEARFHDLVDATQQTLEDIFDESDLDIDLESSAGVLTVKFDNGSQVIFSRQEPLRQLWLAARSGGFHFDYDEESERWMCDKSEEQLGEMLERIVLEQADIKLEFEGL</sequence>
<keyword id="KW-0408">Iron</keyword>
<keyword id="KW-0479">Metal-binding</keyword>
<comment type="function">
    <text evidence="1">Involved in iron-sulfur (Fe-S) cluster assembly. May act as a regulator of Fe-S biogenesis.</text>
</comment>
<comment type="similarity">
    <text evidence="1">Belongs to the frataxin family.</text>
</comment>
<gene>
    <name evidence="1" type="primary">cyaY</name>
    <name type="ordered locus">PFL_6010</name>
</gene>
<dbReference type="EMBL" id="CP000076">
    <property type="protein sequence ID" value="AAY95199.1"/>
    <property type="molecule type" value="Genomic_DNA"/>
</dbReference>
<dbReference type="RefSeq" id="WP_011064183.1">
    <property type="nucleotide sequence ID" value="NC_004129.6"/>
</dbReference>
<dbReference type="SMR" id="Q4K3W5"/>
<dbReference type="STRING" id="220664.PFL_6010"/>
<dbReference type="GeneID" id="57478969"/>
<dbReference type="KEGG" id="pfl:PFL_6010"/>
<dbReference type="PATRIC" id="fig|220664.5.peg.6134"/>
<dbReference type="eggNOG" id="COG1965">
    <property type="taxonomic scope" value="Bacteria"/>
</dbReference>
<dbReference type="HOGENOM" id="CLU_080880_3_0_6"/>
<dbReference type="Proteomes" id="UP000008540">
    <property type="component" value="Chromosome"/>
</dbReference>
<dbReference type="GO" id="GO:0005829">
    <property type="term" value="C:cytosol"/>
    <property type="evidence" value="ECO:0007669"/>
    <property type="project" value="TreeGrafter"/>
</dbReference>
<dbReference type="GO" id="GO:0008199">
    <property type="term" value="F:ferric iron binding"/>
    <property type="evidence" value="ECO:0007669"/>
    <property type="project" value="InterPro"/>
</dbReference>
<dbReference type="GO" id="GO:0008198">
    <property type="term" value="F:ferrous iron binding"/>
    <property type="evidence" value="ECO:0007669"/>
    <property type="project" value="TreeGrafter"/>
</dbReference>
<dbReference type="GO" id="GO:0016226">
    <property type="term" value="P:iron-sulfur cluster assembly"/>
    <property type="evidence" value="ECO:0007669"/>
    <property type="project" value="UniProtKB-UniRule"/>
</dbReference>
<dbReference type="Gene3D" id="3.30.920.10">
    <property type="entry name" value="Frataxin/CyaY"/>
    <property type="match status" value="1"/>
</dbReference>
<dbReference type="HAMAP" id="MF_00142">
    <property type="entry name" value="CyaY"/>
    <property type="match status" value="1"/>
</dbReference>
<dbReference type="InterPro" id="IPR047584">
    <property type="entry name" value="CyaY"/>
</dbReference>
<dbReference type="InterPro" id="IPR002908">
    <property type="entry name" value="Frataxin/CyaY"/>
</dbReference>
<dbReference type="InterPro" id="IPR036524">
    <property type="entry name" value="Frataxin/CyaY_sf"/>
</dbReference>
<dbReference type="InterPro" id="IPR020895">
    <property type="entry name" value="Frataxin_CS"/>
</dbReference>
<dbReference type="NCBIfam" id="TIGR03421">
    <property type="entry name" value="FeS_CyaY"/>
    <property type="match status" value="1"/>
</dbReference>
<dbReference type="PANTHER" id="PTHR16821">
    <property type="entry name" value="FRATAXIN"/>
    <property type="match status" value="1"/>
</dbReference>
<dbReference type="PANTHER" id="PTHR16821:SF2">
    <property type="entry name" value="FRATAXIN, MITOCHONDRIAL"/>
    <property type="match status" value="1"/>
</dbReference>
<dbReference type="Pfam" id="PF01491">
    <property type="entry name" value="Frataxin_Cyay"/>
    <property type="match status" value="1"/>
</dbReference>
<dbReference type="SMART" id="SM01219">
    <property type="entry name" value="Frataxin_Cyay"/>
    <property type="match status" value="1"/>
</dbReference>
<dbReference type="SUPFAM" id="SSF55387">
    <property type="entry name" value="Frataxin/Nqo15-like"/>
    <property type="match status" value="1"/>
</dbReference>
<dbReference type="PROSITE" id="PS01344">
    <property type="entry name" value="FRATAXIN_1"/>
    <property type="match status" value="1"/>
</dbReference>
<dbReference type="PROSITE" id="PS50810">
    <property type="entry name" value="FRATAXIN_2"/>
    <property type="match status" value="1"/>
</dbReference>
<evidence type="ECO:0000255" key="1">
    <source>
        <dbReference type="HAMAP-Rule" id="MF_00142"/>
    </source>
</evidence>
<proteinExistence type="inferred from homology"/>
<reference key="1">
    <citation type="journal article" date="2005" name="Nat. Biotechnol.">
        <title>Complete genome sequence of the plant commensal Pseudomonas fluorescens Pf-5.</title>
        <authorList>
            <person name="Paulsen I.T."/>
            <person name="Press C.M."/>
            <person name="Ravel J."/>
            <person name="Kobayashi D.Y."/>
            <person name="Myers G.S.A."/>
            <person name="Mavrodi D.V."/>
            <person name="DeBoy R.T."/>
            <person name="Seshadri R."/>
            <person name="Ren Q."/>
            <person name="Madupu R."/>
            <person name="Dodson R.J."/>
            <person name="Durkin A.S."/>
            <person name="Brinkac L.M."/>
            <person name="Daugherty S.C."/>
            <person name="Sullivan S.A."/>
            <person name="Rosovitz M.J."/>
            <person name="Gwinn M.L."/>
            <person name="Zhou L."/>
            <person name="Schneider D.J."/>
            <person name="Cartinhour S.W."/>
            <person name="Nelson W.C."/>
            <person name="Weidman J."/>
            <person name="Watkins K."/>
            <person name="Tran K."/>
            <person name="Khouri H."/>
            <person name="Pierson E.A."/>
            <person name="Pierson L.S. III"/>
            <person name="Thomashow L.S."/>
            <person name="Loper J.E."/>
        </authorList>
    </citation>
    <scope>NUCLEOTIDE SEQUENCE [LARGE SCALE GENOMIC DNA]</scope>
    <source>
        <strain>ATCC BAA-477 / NRRL B-23932 / Pf-5</strain>
    </source>
</reference>
<protein>
    <recommendedName>
        <fullName evidence="1">Iron-sulfur cluster assembly protein CyaY</fullName>
    </recommendedName>
</protein>
<name>CYAY_PSEF5</name>